<name>RPB9A_ARATH</name>
<organism>
    <name type="scientific">Arabidopsis thaliana</name>
    <name type="common">Mouse-ear cress</name>
    <dbReference type="NCBI Taxonomy" id="3702"/>
    <lineage>
        <taxon>Eukaryota</taxon>
        <taxon>Viridiplantae</taxon>
        <taxon>Streptophyta</taxon>
        <taxon>Embryophyta</taxon>
        <taxon>Tracheophyta</taxon>
        <taxon>Spermatophyta</taxon>
        <taxon>Magnoliopsida</taxon>
        <taxon>eudicotyledons</taxon>
        <taxon>Gunneridae</taxon>
        <taxon>Pentapetalae</taxon>
        <taxon>rosids</taxon>
        <taxon>malvids</taxon>
        <taxon>Brassicales</taxon>
        <taxon>Brassicaceae</taxon>
        <taxon>Camelineae</taxon>
        <taxon>Arabidopsis</taxon>
    </lineage>
</organism>
<dbReference type="EMBL" id="AB026636">
    <property type="status" value="NOT_ANNOTATED_CDS"/>
    <property type="molecule type" value="Genomic_DNA"/>
</dbReference>
<dbReference type="EMBL" id="CP002686">
    <property type="protein sequence ID" value="AEE75891.1"/>
    <property type="molecule type" value="Genomic_DNA"/>
</dbReference>
<dbReference type="EMBL" id="BT012109">
    <property type="protein sequence ID" value="AAS76204.1"/>
    <property type="molecule type" value="mRNA"/>
</dbReference>
<dbReference type="EMBL" id="BT012363">
    <property type="protein sequence ID" value="AAS88753.1"/>
    <property type="molecule type" value="mRNA"/>
</dbReference>
<dbReference type="RefSeq" id="NP_188323.1">
    <property type="nucleotide sequence ID" value="NM_112574.3"/>
</dbReference>
<dbReference type="PDB" id="7EU0">
    <property type="method" value="EM"/>
    <property type="resolution" value="3.16 A"/>
    <property type="chains" value="I=1-114"/>
</dbReference>
<dbReference type="PDB" id="7EU1">
    <property type="method" value="EM"/>
    <property type="resolution" value="3.86 A"/>
    <property type="chains" value="I=1-114"/>
</dbReference>
<dbReference type="PDB" id="8HYJ">
    <property type="method" value="EM"/>
    <property type="resolution" value="4.30 A"/>
    <property type="chains" value="I=1-114"/>
</dbReference>
<dbReference type="PDB" id="8XMB">
    <property type="method" value="EM"/>
    <property type="resolution" value="3.40 A"/>
    <property type="chains" value="I=1-114"/>
</dbReference>
<dbReference type="PDB" id="8XMC">
    <property type="method" value="EM"/>
    <property type="resolution" value="3.10 A"/>
    <property type="chains" value="I=1-114"/>
</dbReference>
<dbReference type="PDB" id="8XMD">
    <property type="method" value="EM"/>
    <property type="resolution" value="3.40 A"/>
    <property type="chains" value="I=1-114"/>
</dbReference>
<dbReference type="PDB" id="8XME">
    <property type="method" value="EM"/>
    <property type="resolution" value="3.10 A"/>
    <property type="chains" value="I=1-114"/>
</dbReference>
<dbReference type="PDBsum" id="7EU0"/>
<dbReference type="PDBsum" id="7EU1"/>
<dbReference type="PDBsum" id="8HYJ"/>
<dbReference type="PDBsum" id="8XMB"/>
<dbReference type="PDBsum" id="8XMC"/>
<dbReference type="PDBsum" id="8XMD"/>
<dbReference type="PDBsum" id="8XME"/>
<dbReference type="EMDB" id="EMD-31305"/>
<dbReference type="EMDB" id="EMD-31306"/>
<dbReference type="EMDB" id="EMD-35086"/>
<dbReference type="EMDB" id="EMD-38470"/>
<dbReference type="EMDB" id="EMD-38471"/>
<dbReference type="EMDB" id="EMD-38472"/>
<dbReference type="EMDB" id="EMD-38473"/>
<dbReference type="SMR" id="Q6NLH0"/>
<dbReference type="BioGRID" id="6287">
    <property type="interactions" value="40"/>
</dbReference>
<dbReference type="FunCoup" id="Q6NLH0">
    <property type="interactions" value="1812"/>
</dbReference>
<dbReference type="IntAct" id="Q6NLH0">
    <property type="interactions" value="16"/>
</dbReference>
<dbReference type="STRING" id="3702.Q6NLH0"/>
<dbReference type="PaxDb" id="3702-AT3G16980.1"/>
<dbReference type="ProteomicsDB" id="227964"/>
<dbReference type="EnsemblPlants" id="AT3G16980.1">
    <property type="protein sequence ID" value="AT3G16980.1"/>
    <property type="gene ID" value="AT3G16980"/>
</dbReference>
<dbReference type="GeneID" id="820954"/>
<dbReference type="Gramene" id="AT3G16980.1">
    <property type="protein sequence ID" value="AT3G16980.1"/>
    <property type="gene ID" value="AT3G16980"/>
</dbReference>
<dbReference type="KEGG" id="ath:AT3G16980"/>
<dbReference type="Araport" id="AT3G16980"/>
<dbReference type="TAIR" id="AT3G16980">
    <property type="gene designation" value="NRPB9A"/>
</dbReference>
<dbReference type="eggNOG" id="KOG2691">
    <property type="taxonomic scope" value="Eukaryota"/>
</dbReference>
<dbReference type="HOGENOM" id="CLU_093932_0_1_1"/>
<dbReference type="InParanoid" id="Q6NLH0"/>
<dbReference type="OMA" id="EVADNSC"/>
<dbReference type="OrthoDB" id="282270at2759"/>
<dbReference type="PhylomeDB" id="Q6NLH0"/>
<dbReference type="PRO" id="PR:Q6NLH0"/>
<dbReference type="Proteomes" id="UP000006548">
    <property type="component" value="Chromosome 3"/>
</dbReference>
<dbReference type="ExpressionAtlas" id="Q6NLH0">
    <property type="expression patterns" value="baseline and differential"/>
</dbReference>
<dbReference type="GO" id="GO:0005730">
    <property type="term" value="C:nucleolus"/>
    <property type="evidence" value="ECO:0007669"/>
    <property type="project" value="UniProtKB-SubCell"/>
</dbReference>
<dbReference type="GO" id="GO:0005665">
    <property type="term" value="C:RNA polymerase II, core complex"/>
    <property type="evidence" value="ECO:0000314"/>
    <property type="project" value="UniProtKB"/>
</dbReference>
<dbReference type="GO" id="GO:0000419">
    <property type="term" value="C:RNA polymerase V complex"/>
    <property type="evidence" value="ECO:0000314"/>
    <property type="project" value="UniProtKB"/>
</dbReference>
<dbReference type="GO" id="GO:0003899">
    <property type="term" value="F:DNA-directed RNA polymerase activity"/>
    <property type="evidence" value="ECO:0007669"/>
    <property type="project" value="InterPro"/>
</dbReference>
<dbReference type="GO" id="GO:0003676">
    <property type="term" value="F:nucleic acid binding"/>
    <property type="evidence" value="ECO:0007669"/>
    <property type="project" value="InterPro"/>
</dbReference>
<dbReference type="GO" id="GO:0008270">
    <property type="term" value="F:zinc ion binding"/>
    <property type="evidence" value="ECO:0007669"/>
    <property type="project" value="UniProtKB-KW"/>
</dbReference>
<dbReference type="GO" id="GO:0006351">
    <property type="term" value="P:DNA-templated transcription"/>
    <property type="evidence" value="ECO:0007669"/>
    <property type="project" value="InterPro"/>
</dbReference>
<dbReference type="CDD" id="cd10508">
    <property type="entry name" value="Zn-ribbon_RPB9"/>
    <property type="match status" value="1"/>
</dbReference>
<dbReference type="FunFam" id="2.20.25.10:FF:000008">
    <property type="entry name" value="DNA-directed RNA polymerase II subunit RPB9"/>
    <property type="match status" value="1"/>
</dbReference>
<dbReference type="FunFam" id="2.20.25.10:FF:000004">
    <property type="entry name" value="DNA-directed RNA polymerase subunit"/>
    <property type="match status" value="1"/>
</dbReference>
<dbReference type="Gene3D" id="2.20.25.10">
    <property type="match status" value="2"/>
</dbReference>
<dbReference type="InterPro" id="IPR019761">
    <property type="entry name" value="DNA-dir_RNA_pol-M_15_CS"/>
</dbReference>
<dbReference type="InterPro" id="IPR012164">
    <property type="entry name" value="Rpa12/Rpb9/Rpc10/TFS"/>
</dbReference>
<dbReference type="InterPro" id="IPR001529">
    <property type="entry name" value="Zn_ribbon_RPB9"/>
</dbReference>
<dbReference type="InterPro" id="IPR034012">
    <property type="entry name" value="Zn_ribbon_RPB9_C"/>
</dbReference>
<dbReference type="InterPro" id="IPR001222">
    <property type="entry name" value="Znf_TFIIS"/>
</dbReference>
<dbReference type="PANTHER" id="PTHR11239">
    <property type="entry name" value="DNA-DIRECTED RNA POLYMERASE"/>
    <property type="match status" value="1"/>
</dbReference>
<dbReference type="PANTHER" id="PTHR11239:SF1">
    <property type="entry name" value="DNA-DIRECTED RNA POLYMERASE II SUBUNIT RPB9"/>
    <property type="match status" value="1"/>
</dbReference>
<dbReference type="Pfam" id="PF02150">
    <property type="entry name" value="Zn_ribbon_RPB9"/>
    <property type="match status" value="1"/>
</dbReference>
<dbReference type="Pfam" id="PF01096">
    <property type="entry name" value="Zn_ribbon_TFIIS"/>
    <property type="match status" value="1"/>
</dbReference>
<dbReference type="PIRSF" id="PIRSF005586">
    <property type="entry name" value="RNApol_RpoM"/>
    <property type="match status" value="1"/>
</dbReference>
<dbReference type="SMART" id="SM00661">
    <property type="entry name" value="RPOL9"/>
    <property type="match status" value="1"/>
</dbReference>
<dbReference type="SMART" id="SM00440">
    <property type="entry name" value="ZnF_C2C2"/>
    <property type="match status" value="1"/>
</dbReference>
<dbReference type="SUPFAM" id="SSF57783">
    <property type="entry name" value="Zinc beta-ribbon"/>
    <property type="match status" value="2"/>
</dbReference>
<dbReference type="PROSITE" id="PS01030">
    <property type="entry name" value="RNA_POL_M_15KD"/>
    <property type="match status" value="1"/>
</dbReference>
<dbReference type="PROSITE" id="PS51133">
    <property type="entry name" value="ZF_TFIIS_2"/>
    <property type="match status" value="1"/>
</dbReference>
<evidence type="ECO:0000250" key="1">
    <source>
        <dbReference type="UniProtKB" id="P32529"/>
    </source>
</evidence>
<evidence type="ECO:0000255" key="2">
    <source>
        <dbReference type="PROSITE-ProRule" id="PRU00472"/>
    </source>
</evidence>
<evidence type="ECO:0000255" key="3">
    <source>
        <dbReference type="PROSITE-ProRule" id="PRU10145"/>
    </source>
</evidence>
<evidence type="ECO:0000269" key="4">
    <source>
    </source>
</evidence>
<evidence type="ECO:0000269" key="5">
    <source>
    </source>
</evidence>
<evidence type="ECO:0000269" key="6">
    <source>
    </source>
</evidence>
<evidence type="ECO:0000305" key="7"/>
<evidence type="ECO:0000305" key="8">
    <source>
    </source>
</evidence>
<evidence type="ECO:0007829" key="9">
    <source>
        <dbReference type="PDB" id="7EU0"/>
    </source>
</evidence>
<evidence type="ECO:0007829" key="10">
    <source>
        <dbReference type="PDB" id="8XMD"/>
    </source>
</evidence>
<accession>Q6NLH0</accession>
<keyword id="KW-0002">3D-structure</keyword>
<keyword id="KW-0240">DNA-directed RNA polymerase</keyword>
<keyword id="KW-0479">Metal-binding</keyword>
<keyword id="KW-0539">Nucleus</keyword>
<keyword id="KW-1185">Reference proteome</keyword>
<keyword id="KW-0804">Transcription</keyword>
<keyword id="KW-0862">Zinc</keyword>
<keyword id="KW-0863">Zinc-finger</keyword>
<reference key="1">
    <citation type="journal article" date="2000" name="DNA Res.">
        <title>Structural analysis of Arabidopsis thaliana chromosome 3. I. Sequence features of the regions of 4,504,864 bp covered by sixty P1 and TAC clones.</title>
        <authorList>
            <person name="Sato S."/>
            <person name="Nakamura Y."/>
            <person name="Kaneko T."/>
            <person name="Katoh T."/>
            <person name="Asamizu E."/>
            <person name="Tabata S."/>
        </authorList>
    </citation>
    <scope>NUCLEOTIDE SEQUENCE [LARGE SCALE GENOMIC DNA]</scope>
    <source>
        <strain>cv. Columbia</strain>
    </source>
</reference>
<reference key="2">
    <citation type="journal article" date="2017" name="Plant J.">
        <title>Araport11: a complete reannotation of the Arabidopsis thaliana reference genome.</title>
        <authorList>
            <person name="Cheng C.Y."/>
            <person name="Krishnakumar V."/>
            <person name="Chan A.P."/>
            <person name="Thibaud-Nissen F."/>
            <person name="Schobel S."/>
            <person name="Town C.D."/>
        </authorList>
    </citation>
    <scope>GENOME REANNOTATION</scope>
    <source>
        <strain>cv. Columbia</strain>
    </source>
</reference>
<reference key="3">
    <citation type="submission" date="2004-04" db="EMBL/GenBank/DDBJ databases">
        <title>Arabidopsis ORF clones.</title>
        <authorList>
            <person name="Shinn P."/>
            <person name="Chen H."/>
            <person name="Cheuk R."/>
            <person name="Kim C.J."/>
            <person name="Ecker J.R."/>
        </authorList>
    </citation>
    <scope>NUCLEOTIDE SEQUENCE [LARGE SCALE MRNA]</scope>
</reference>
<reference key="4">
    <citation type="journal article" date="2009" name="Mol. Cell">
        <title>Subunit compositions of the RNA-silencing enzymes Pol IV and Pol V reveal their origins as specialized forms of RNA polymerase II.</title>
        <authorList>
            <person name="Ream T.S."/>
            <person name="Haag J.R."/>
            <person name="Wierzbicki A.T."/>
            <person name="Nicora C.D."/>
            <person name="Norbeck A.D."/>
            <person name="Zhu J.K."/>
            <person name="Hagen G."/>
            <person name="Guilfoyle T.J."/>
            <person name="Pasa-Tolic L."/>
            <person name="Pikaard C.S."/>
        </authorList>
    </citation>
    <scope>FUNCTION</scope>
    <scope>IDENTIFICATION BY MASS SPECTROMETRY</scope>
    <scope>SUBUNIT</scope>
    <scope>NOMENCLATURE</scope>
</reference>
<reference key="5">
    <citation type="journal article" date="2011" name="PLoS Genet.">
        <title>SHH1, a homeodomain protein required for DNA methylation, as well as RDR2, RDM4, and chromatin remodeling factors, associate with RNA polymerase IV.</title>
        <authorList>
            <person name="Law J.A."/>
            <person name="Vashisht A.A."/>
            <person name="Wohlschlegel J.A."/>
            <person name="Jacobsen S.E."/>
        </authorList>
    </citation>
    <scope>IDENTIFICATION BY MASS SPECTROMETRY</scope>
    <scope>INTERACTION WITH NRPD1</scope>
    <scope>SUBUNIT</scope>
</reference>
<reference key="6">
    <citation type="journal article" date="2012" name="Cell Rep.">
        <title>Functional consequences of subunit diversity in RNA polymerases II and V.</title>
        <authorList>
            <person name="Tan E.H."/>
            <person name="Blevins T."/>
            <person name="Ream T.S."/>
            <person name="Pikaard C.S."/>
        </authorList>
    </citation>
    <scope>FUNCTION</scope>
    <scope>DISRUPTION PHENOTYPE</scope>
</reference>
<feature type="chain" id="PRO_0000423336" description="DNA-directed RNA polymerases II, IV and V subunit 9A">
    <location>
        <begin position="1"/>
        <end position="114"/>
    </location>
</feature>
<feature type="zinc finger region" description="TFIIS-type" evidence="2">
    <location>
        <begin position="72"/>
        <end position="113"/>
    </location>
</feature>
<feature type="binding site" evidence="3">
    <location>
        <position position="7"/>
    </location>
    <ligand>
        <name>Zn(2+)</name>
        <dbReference type="ChEBI" id="CHEBI:29105"/>
        <label>1</label>
    </ligand>
</feature>
<feature type="binding site" evidence="3">
    <location>
        <position position="10"/>
    </location>
    <ligand>
        <name>Zn(2+)</name>
        <dbReference type="ChEBI" id="CHEBI:29105"/>
        <label>1</label>
    </ligand>
</feature>
<feature type="binding site" evidence="3">
    <location>
        <position position="29"/>
    </location>
    <ligand>
        <name>Zn(2+)</name>
        <dbReference type="ChEBI" id="CHEBI:29105"/>
        <label>1</label>
    </ligand>
</feature>
<feature type="binding site" evidence="3">
    <location>
        <position position="32"/>
    </location>
    <ligand>
        <name>Zn(2+)</name>
        <dbReference type="ChEBI" id="CHEBI:29105"/>
        <label>1</label>
    </ligand>
</feature>
<feature type="binding site" evidence="2">
    <location>
        <position position="76"/>
    </location>
    <ligand>
        <name>Zn(2+)</name>
        <dbReference type="ChEBI" id="CHEBI:29105"/>
        <label>2</label>
    </ligand>
</feature>
<feature type="binding site" evidence="2">
    <location>
        <position position="79"/>
    </location>
    <ligand>
        <name>Zn(2+)</name>
        <dbReference type="ChEBI" id="CHEBI:29105"/>
        <label>2</label>
    </ligand>
</feature>
<feature type="binding site" evidence="2">
    <location>
        <position position="103"/>
    </location>
    <ligand>
        <name>Zn(2+)</name>
        <dbReference type="ChEBI" id="CHEBI:29105"/>
        <label>2</label>
    </ligand>
</feature>
<feature type="binding site" evidence="2">
    <location>
        <position position="108"/>
    </location>
    <ligand>
        <name>Zn(2+)</name>
        <dbReference type="ChEBI" id="CHEBI:29105"/>
        <label>2</label>
    </ligand>
</feature>
<feature type="strand" evidence="9">
    <location>
        <begin position="8"/>
        <end position="10"/>
    </location>
</feature>
<feature type="strand" evidence="9">
    <location>
        <begin position="12"/>
        <end position="19"/>
    </location>
</feature>
<feature type="turn" evidence="9">
    <location>
        <begin position="20"/>
        <end position="23"/>
    </location>
</feature>
<feature type="strand" evidence="9">
    <location>
        <begin position="24"/>
        <end position="33"/>
    </location>
</feature>
<feature type="strand" evidence="9">
    <location>
        <begin position="35"/>
        <end position="37"/>
    </location>
</feature>
<feature type="strand" evidence="9">
    <location>
        <begin position="42"/>
        <end position="47"/>
    </location>
</feature>
<feature type="turn" evidence="9">
    <location>
        <begin position="54"/>
        <end position="61"/>
    </location>
</feature>
<feature type="strand" evidence="10">
    <location>
        <begin position="70"/>
        <end position="74"/>
    </location>
</feature>
<feature type="strand" evidence="9">
    <location>
        <begin position="77"/>
        <end position="79"/>
    </location>
</feature>
<feature type="strand" evidence="9">
    <location>
        <begin position="84"/>
        <end position="89"/>
    </location>
</feature>
<feature type="strand" evidence="9">
    <location>
        <begin position="92"/>
        <end position="96"/>
    </location>
</feature>
<feature type="strand" evidence="9">
    <location>
        <begin position="98"/>
        <end position="103"/>
    </location>
</feature>
<feature type="turn" evidence="9">
    <location>
        <begin position="106"/>
        <end position="108"/>
    </location>
</feature>
<feature type="strand" evidence="9">
    <location>
        <begin position="111"/>
        <end position="113"/>
    </location>
</feature>
<sequence length="114" mass="13276">MSTMKFCRECNNILYPKEDKEQKILLYACRNCDHQEVADNSCVYRNEVHHSVSERTQILTDVASDPTLPRTKAVRCSKCQHREAVFFQATARGEEGMTLFFVCCNPNCGHRWRE</sequence>
<comment type="function">
    <text evidence="4 6">DNA-dependent RNA polymerase catalyzes the transcription of DNA into RNA using the four ribonucleoside triphosphates as substrates. Component of RNA polymerase II which synthesizes mRNA precursors and many functional non-coding RNAs. Pol II is the central component of the basal RNA polymerase II transcription machinery. It is composed of mobile elements that move relative to each other. Component of RNA polymerases IV and V which mediate short-interfering RNAs (siRNA) accumulation and subsequent RNA-directed DNA methylation-dependent (RdDM) transcriptional gene silencing (TGS) of endogenous repeated sequences, including transposable elements. Required for RNA silencing.</text>
</comment>
<comment type="subunit">
    <text evidence="4 5">Component of the RNA polymerase II, IV and V complexes. Interacts with NRPD1.</text>
</comment>
<comment type="interaction">
    <interactant intactId="EBI-2130783">
        <id>Q6NLH0</id>
    </interactant>
    <interactant intactId="EBI-4426557">
        <id>Q84MB2</id>
        <label>TIFY8</label>
    </interactant>
    <organismsDiffer>false</organismsDiffer>
    <experiments>4</experiments>
</comment>
<comment type="subcellular location">
    <subcellularLocation>
        <location evidence="1">Nucleus</location>
        <location evidence="1">Nucleolus</location>
    </subcellularLocation>
</comment>
<comment type="disruption phenotype">
    <text evidence="6">No visible phenotype; due to the redundancy with NRPB9B. No effect on methylation at RdDM target sites. Nrpb9a and nrpb9b double mutants are embryo lethal.</text>
</comment>
<comment type="miscellaneous">
    <text evidence="8">Pol IV and V functions are not impaired in nrpb9a mutants and Pol II functions are complemented by NRPB9B.</text>
</comment>
<comment type="similarity">
    <text evidence="7">Belongs to the archaeal RpoM/eukaryotic RPA12/RPB9/RPC11 RNA polymerase family.</text>
</comment>
<proteinExistence type="evidence at protein level"/>
<gene>
    <name type="primary">NRPB9A</name>
    <name type="synonym">NRPE9A</name>
    <name type="ordered locus">At3g16980</name>
    <name type="ORF">K14A17</name>
</gene>
<protein>
    <recommendedName>
        <fullName>DNA-directed RNA polymerases II, IV and V subunit 9A</fullName>
    </recommendedName>
</protein>